<proteinExistence type="inferred from homology"/>
<sequence length="102" mass="11433">FGSLLGLCLITQILTGLFLAMHYTADTSSAFSSVAHICRDVNYGWLMRNIHANGASFFFICIFLHIGRGMYYGSYMFKETWNIGVILLFLVMATAFVGYVLP</sequence>
<name>CYB_AMBTI</name>
<feature type="chain" id="PRO_0000060572" description="Cytochrome b">
    <location>
        <begin position="1" status="less than"/>
        <end position="102" status="greater than"/>
    </location>
</feature>
<feature type="transmembrane region" description="Helical" evidence="3">
    <location>
        <begin position="1"/>
        <end position="21"/>
    </location>
</feature>
<feature type="transmembrane region" description="Helical" evidence="2">
    <location>
        <begin position="45"/>
        <end position="66"/>
    </location>
</feature>
<feature type="transmembrane region" description="Helical" evidence="3">
    <location>
        <begin position="81"/>
        <end position="101"/>
    </location>
</feature>
<feature type="binding site" description="axial binding residue" evidence="2">
    <location>
        <position position="51"/>
    </location>
    <ligand>
        <name>heme b</name>
        <dbReference type="ChEBI" id="CHEBI:60344"/>
        <label>b562</label>
    </ligand>
    <ligandPart>
        <name>Fe</name>
        <dbReference type="ChEBI" id="CHEBI:18248"/>
    </ligandPart>
</feature>
<feature type="binding site" description="axial binding residue" evidence="2">
    <location>
        <position position="65"/>
    </location>
    <ligand>
        <name>heme b</name>
        <dbReference type="ChEBI" id="CHEBI:60344"/>
        <label>b566</label>
    </ligand>
    <ligandPart>
        <name>Fe</name>
        <dbReference type="ChEBI" id="CHEBI:18248"/>
    </ligandPart>
</feature>
<feature type="non-terminal residue">
    <location>
        <position position="1"/>
    </location>
</feature>
<feature type="non-terminal residue">
    <location>
        <position position="102"/>
    </location>
</feature>
<organism>
    <name type="scientific">Ambystoma tigrinum</name>
    <name type="common">Eastern tiger salamander</name>
    <dbReference type="NCBI Taxonomy" id="8305"/>
    <lineage>
        <taxon>Eukaryota</taxon>
        <taxon>Metazoa</taxon>
        <taxon>Chordata</taxon>
        <taxon>Craniata</taxon>
        <taxon>Vertebrata</taxon>
        <taxon>Euteleostomi</taxon>
        <taxon>Amphibia</taxon>
        <taxon>Batrachia</taxon>
        <taxon>Caudata</taxon>
        <taxon>Salamandroidea</taxon>
        <taxon>Ambystomatidae</taxon>
        <taxon>Ambystoma</taxon>
    </lineage>
</organism>
<accession>P34860</accession>
<protein>
    <recommendedName>
        <fullName>Cytochrome b</fullName>
    </recommendedName>
    <alternativeName>
        <fullName>Complex III subunit 3</fullName>
    </alternativeName>
    <alternativeName>
        <fullName>Complex III subunit III</fullName>
    </alternativeName>
    <alternativeName>
        <fullName>Cytochrome b-c1 complex subunit 3</fullName>
    </alternativeName>
    <alternativeName>
        <fullName>Ubiquinol-cytochrome-c reductase complex cytochrome b subunit</fullName>
    </alternativeName>
</protein>
<reference key="1">
    <citation type="journal article" date="1992" name="Nature">
        <title>Ancestry of unisexual salamanders.</title>
        <authorList>
            <person name="Hedges S.B."/>
            <person name="Bogart J.P."/>
            <person name="Maxson L.R."/>
        </authorList>
    </citation>
    <scope>NUCLEOTIDE SEQUENCE [GENOMIC DNA]</scope>
    <source>
        <strain>Various isolates</strain>
    </source>
</reference>
<reference key="2">
    <citation type="journal article" date="1989" name="Proc. Natl. Acad. Sci. U.S.A.">
        <title>Dynamics of mitochondrial DNA evolution in animals: amplification and sequencing with conserved primers.</title>
        <authorList>
            <person name="Kocher T.D."/>
            <person name="Thomas W.K."/>
            <person name="Meyer A."/>
            <person name="Edwards S.V."/>
            <person name="Paeaebo S."/>
            <person name="Villablanca F.X."/>
            <person name="Wilson A.C."/>
        </authorList>
    </citation>
    <scope>NUCLEOTIDE SEQUENCE [GENOMIC DNA] OF 15-89</scope>
</reference>
<dbReference type="EMBL" id="Z11627">
    <property type="protein sequence ID" value="CAA77702.1"/>
    <property type="molecule type" value="Genomic_DNA"/>
</dbReference>
<dbReference type="EMBL" id="Z11628">
    <property type="protein sequence ID" value="CAA77703.1"/>
    <property type="molecule type" value="Genomic_DNA"/>
</dbReference>
<dbReference type="EMBL" id="Z11631">
    <property type="protein sequence ID" value="CAA77706.1"/>
    <property type="molecule type" value="Genomic_DNA"/>
</dbReference>
<dbReference type="EMBL" id="Z11632">
    <property type="protein sequence ID" value="CAA77707.1"/>
    <property type="molecule type" value="Genomic_DNA"/>
</dbReference>
<dbReference type="EMBL" id="Z11634">
    <property type="protein sequence ID" value="CAA77709.1"/>
    <property type="molecule type" value="Genomic_DNA"/>
</dbReference>
<dbReference type="EMBL" id="Z11635">
    <property type="protein sequence ID" value="CAA77710.1"/>
    <property type="molecule type" value="Genomic_DNA"/>
</dbReference>
<dbReference type="EMBL" id="Z11636">
    <property type="protein sequence ID" value="CAA77711.1"/>
    <property type="molecule type" value="Genomic_DNA"/>
</dbReference>
<dbReference type="EMBL" id="Z11637">
    <property type="protein sequence ID" value="CAA77712.1"/>
    <property type="molecule type" value="Genomic_DNA"/>
</dbReference>
<dbReference type="EMBL" id="Z11638">
    <property type="protein sequence ID" value="CAA77713.1"/>
    <property type="molecule type" value="Genomic_DNA"/>
</dbReference>
<dbReference type="EMBL" id="Z11639">
    <property type="protein sequence ID" value="CAA77714.1"/>
    <property type="molecule type" value="Genomic_DNA"/>
</dbReference>
<dbReference type="EMBL" id="Z11640">
    <property type="protein sequence ID" value="CAA77715.1"/>
    <property type="molecule type" value="Genomic_DNA"/>
</dbReference>
<dbReference type="EMBL" id="Z11645">
    <property type="protein sequence ID" value="CAA77720.1"/>
    <property type="molecule type" value="Genomic_DNA"/>
</dbReference>
<dbReference type="EMBL" id="Z11648">
    <property type="protein sequence ID" value="CAA77723.1"/>
    <property type="molecule type" value="Genomic_DNA"/>
</dbReference>
<dbReference type="EMBL" id="Z11659">
    <property type="protein sequence ID" value="CAA77728.1"/>
    <property type="molecule type" value="Genomic_DNA"/>
</dbReference>
<dbReference type="EMBL" id="M26230">
    <property type="protein sequence ID" value="AAA31635.1"/>
    <property type="molecule type" value="Genomic_DNA"/>
</dbReference>
<dbReference type="SMR" id="P34860"/>
<dbReference type="GO" id="GO:0005743">
    <property type="term" value="C:mitochondrial inner membrane"/>
    <property type="evidence" value="ECO:0007669"/>
    <property type="project" value="UniProtKB-SubCell"/>
</dbReference>
<dbReference type="GO" id="GO:0046872">
    <property type="term" value="F:metal ion binding"/>
    <property type="evidence" value="ECO:0007669"/>
    <property type="project" value="UniProtKB-KW"/>
</dbReference>
<dbReference type="GO" id="GO:0008121">
    <property type="term" value="F:ubiquinol-cytochrome-c reductase activity"/>
    <property type="evidence" value="ECO:0007669"/>
    <property type="project" value="TreeGrafter"/>
</dbReference>
<dbReference type="GO" id="GO:0006122">
    <property type="term" value="P:mitochondrial electron transport, ubiquinol to cytochrome c"/>
    <property type="evidence" value="ECO:0007669"/>
    <property type="project" value="TreeGrafter"/>
</dbReference>
<dbReference type="Gene3D" id="1.20.810.10">
    <property type="entry name" value="Cytochrome Bc1 Complex, Chain C"/>
    <property type="match status" value="1"/>
</dbReference>
<dbReference type="InterPro" id="IPR005797">
    <property type="entry name" value="Cyt_b/b6_N"/>
</dbReference>
<dbReference type="InterPro" id="IPR027387">
    <property type="entry name" value="Cytb/b6-like_sf"/>
</dbReference>
<dbReference type="InterPro" id="IPR016174">
    <property type="entry name" value="Di-haem_cyt_TM"/>
</dbReference>
<dbReference type="PANTHER" id="PTHR19271">
    <property type="entry name" value="CYTOCHROME B"/>
    <property type="match status" value="1"/>
</dbReference>
<dbReference type="PANTHER" id="PTHR19271:SF16">
    <property type="entry name" value="CYTOCHROME B"/>
    <property type="match status" value="1"/>
</dbReference>
<dbReference type="Pfam" id="PF00033">
    <property type="entry name" value="Cytochrome_B"/>
    <property type="match status" value="1"/>
</dbReference>
<dbReference type="SUPFAM" id="SSF81342">
    <property type="entry name" value="Transmembrane di-heme cytochromes"/>
    <property type="match status" value="1"/>
</dbReference>
<dbReference type="PROSITE" id="PS51002">
    <property type="entry name" value="CYTB_NTER"/>
    <property type="match status" value="1"/>
</dbReference>
<gene>
    <name type="primary">mt-cyb</name>
    <name type="synonym">cob</name>
    <name type="synonym">cytb</name>
    <name type="synonym">mtcyb</name>
</gene>
<keyword id="KW-0249">Electron transport</keyword>
<keyword id="KW-0349">Heme</keyword>
<keyword id="KW-0408">Iron</keyword>
<keyword id="KW-0472">Membrane</keyword>
<keyword id="KW-0479">Metal-binding</keyword>
<keyword id="KW-0496">Mitochondrion</keyword>
<keyword id="KW-0999">Mitochondrion inner membrane</keyword>
<keyword id="KW-0679">Respiratory chain</keyword>
<keyword id="KW-0812">Transmembrane</keyword>
<keyword id="KW-1133">Transmembrane helix</keyword>
<keyword id="KW-0813">Transport</keyword>
<keyword id="KW-0830">Ubiquinone</keyword>
<geneLocation type="mitochondrion"/>
<evidence type="ECO:0000250" key="1"/>
<evidence type="ECO:0000250" key="2">
    <source>
        <dbReference type="UniProtKB" id="P00157"/>
    </source>
</evidence>
<evidence type="ECO:0000255" key="3">
    <source>
        <dbReference type="PROSITE-ProRule" id="PRU00968"/>
    </source>
</evidence>
<comment type="function">
    <text evidence="2">Component of the ubiquinol-cytochrome c reductase complex (complex III or cytochrome b-c1 complex) that is part of the mitochondrial respiratory chain. The b-c1 complex mediates electron transfer from ubiquinol to cytochrome c. Contributes to the generation of a proton gradient across the mitochondrial membrane that is then used for ATP synthesis.</text>
</comment>
<comment type="cofactor">
    <cofactor evidence="2">
        <name>heme b</name>
        <dbReference type="ChEBI" id="CHEBI:60344"/>
    </cofactor>
    <text evidence="2">Binds 2 heme b groups non-covalently.</text>
</comment>
<comment type="subunit">
    <text evidence="2">The cytochrome bc1 complex contains 3 respiratory subunits (MT-CYB, CYC1 and UQCRFS1), 2 core proteins (UQCRC1 and UQCRC2) and probably 6 low-molecular weight proteins.</text>
</comment>
<comment type="subcellular location">
    <subcellularLocation>
        <location evidence="2">Mitochondrion inner membrane</location>
        <topology evidence="2">Multi-pass membrane protein</topology>
    </subcellularLocation>
</comment>
<comment type="miscellaneous">
    <text evidence="1">Heme 1 (or BL or b562) is low-potential and absorbs at about 562 nm, and heme 2 (or BH or b566) is high-potential and absorbs at about 566 nm.</text>
</comment>
<comment type="similarity">
    <text evidence="3">Belongs to the cytochrome b family.</text>
</comment>
<comment type="caution">
    <text evidence="2">The full-length protein contains only eight transmembrane helices, not nine as predicted by bioinformatics tools.</text>
</comment>